<reference key="1">
    <citation type="journal article" date="2008" name="Genome Res.">
        <title>The genome of Pelotomaculum thermopropionicum reveals niche-associated evolution in anaerobic microbiota.</title>
        <authorList>
            <person name="Kosaka T."/>
            <person name="Kato S."/>
            <person name="Shimoyama T."/>
            <person name="Ishii S."/>
            <person name="Abe T."/>
            <person name="Watanabe K."/>
        </authorList>
    </citation>
    <scope>NUCLEOTIDE SEQUENCE [LARGE SCALE GENOMIC DNA]</scope>
    <source>
        <strain>DSM 13744 / JCM 10971 / SI</strain>
    </source>
</reference>
<accession>A5D654</accession>
<feature type="chain" id="PRO_0000335736" description="4-diphosphocytidyl-2-C-methyl-D-erythritol kinase">
    <location>
        <begin position="1"/>
        <end position="287"/>
    </location>
</feature>
<feature type="active site" evidence="1">
    <location>
        <position position="10"/>
    </location>
</feature>
<feature type="active site" evidence="1">
    <location>
        <position position="136"/>
    </location>
</feature>
<feature type="binding site" evidence="1">
    <location>
        <begin position="94"/>
        <end position="104"/>
    </location>
    <ligand>
        <name>ATP</name>
        <dbReference type="ChEBI" id="CHEBI:30616"/>
    </ligand>
</feature>
<organism>
    <name type="scientific">Pelotomaculum thermopropionicum (strain DSM 13744 / JCM 10971 / SI)</name>
    <dbReference type="NCBI Taxonomy" id="370438"/>
    <lineage>
        <taxon>Bacteria</taxon>
        <taxon>Bacillati</taxon>
        <taxon>Bacillota</taxon>
        <taxon>Clostridia</taxon>
        <taxon>Eubacteriales</taxon>
        <taxon>Desulfotomaculaceae</taxon>
        <taxon>Pelotomaculum</taxon>
    </lineage>
</organism>
<name>ISPE_PELTS</name>
<keyword id="KW-0067">ATP-binding</keyword>
<keyword id="KW-0414">Isoprene biosynthesis</keyword>
<keyword id="KW-0418">Kinase</keyword>
<keyword id="KW-0547">Nucleotide-binding</keyword>
<keyword id="KW-1185">Reference proteome</keyword>
<keyword id="KW-0808">Transferase</keyword>
<gene>
    <name evidence="1" type="primary">ispE</name>
    <name type="ordered locus">PTH_0096</name>
</gene>
<protein>
    <recommendedName>
        <fullName evidence="1">4-diphosphocytidyl-2-C-methyl-D-erythritol kinase</fullName>
        <shortName evidence="1">CMK</shortName>
        <ecNumber evidence="1">2.7.1.148</ecNumber>
    </recommendedName>
    <alternativeName>
        <fullName evidence="1">4-(cytidine-5'-diphospho)-2-C-methyl-D-erythritol kinase</fullName>
    </alternativeName>
</protein>
<evidence type="ECO:0000255" key="1">
    <source>
        <dbReference type="HAMAP-Rule" id="MF_00061"/>
    </source>
</evidence>
<dbReference type="EC" id="2.7.1.148" evidence="1"/>
<dbReference type="EMBL" id="AP009389">
    <property type="protein sequence ID" value="BAF58277.1"/>
    <property type="molecule type" value="Genomic_DNA"/>
</dbReference>
<dbReference type="SMR" id="A5D654"/>
<dbReference type="STRING" id="370438.PTH_0096"/>
<dbReference type="KEGG" id="pth:PTH_0096"/>
<dbReference type="eggNOG" id="COG1947">
    <property type="taxonomic scope" value="Bacteria"/>
</dbReference>
<dbReference type="HOGENOM" id="CLU_053057_1_1_9"/>
<dbReference type="UniPathway" id="UPA00056">
    <property type="reaction ID" value="UER00094"/>
</dbReference>
<dbReference type="Proteomes" id="UP000006556">
    <property type="component" value="Chromosome"/>
</dbReference>
<dbReference type="GO" id="GO:0050515">
    <property type="term" value="F:4-(cytidine 5'-diphospho)-2-C-methyl-D-erythritol kinase activity"/>
    <property type="evidence" value="ECO:0007669"/>
    <property type="project" value="UniProtKB-UniRule"/>
</dbReference>
<dbReference type="GO" id="GO:0005524">
    <property type="term" value="F:ATP binding"/>
    <property type="evidence" value="ECO:0007669"/>
    <property type="project" value="UniProtKB-UniRule"/>
</dbReference>
<dbReference type="GO" id="GO:0019288">
    <property type="term" value="P:isopentenyl diphosphate biosynthetic process, methylerythritol 4-phosphate pathway"/>
    <property type="evidence" value="ECO:0007669"/>
    <property type="project" value="UniProtKB-UniRule"/>
</dbReference>
<dbReference type="GO" id="GO:0016114">
    <property type="term" value="P:terpenoid biosynthetic process"/>
    <property type="evidence" value="ECO:0007669"/>
    <property type="project" value="InterPro"/>
</dbReference>
<dbReference type="Gene3D" id="3.30.230.10">
    <property type="match status" value="1"/>
</dbReference>
<dbReference type="Gene3D" id="3.30.70.890">
    <property type="entry name" value="GHMP kinase, C-terminal domain"/>
    <property type="match status" value="1"/>
</dbReference>
<dbReference type="HAMAP" id="MF_00061">
    <property type="entry name" value="IspE"/>
    <property type="match status" value="1"/>
</dbReference>
<dbReference type="InterPro" id="IPR013750">
    <property type="entry name" value="GHMP_kinase_C_dom"/>
</dbReference>
<dbReference type="InterPro" id="IPR036554">
    <property type="entry name" value="GHMP_kinase_C_sf"/>
</dbReference>
<dbReference type="InterPro" id="IPR006204">
    <property type="entry name" value="GHMP_kinase_N_dom"/>
</dbReference>
<dbReference type="InterPro" id="IPR004424">
    <property type="entry name" value="IspE"/>
</dbReference>
<dbReference type="InterPro" id="IPR020568">
    <property type="entry name" value="Ribosomal_Su5_D2-typ_SF"/>
</dbReference>
<dbReference type="InterPro" id="IPR014721">
    <property type="entry name" value="Ribsml_uS5_D2-typ_fold_subgr"/>
</dbReference>
<dbReference type="NCBIfam" id="TIGR00154">
    <property type="entry name" value="ispE"/>
    <property type="match status" value="1"/>
</dbReference>
<dbReference type="NCBIfam" id="NF011202">
    <property type="entry name" value="PRK14608.1"/>
    <property type="match status" value="1"/>
</dbReference>
<dbReference type="PANTHER" id="PTHR43527">
    <property type="entry name" value="4-DIPHOSPHOCYTIDYL-2-C-METHYL-D-ERYTHRITOL KINASE, CHLOROPLASTIC"/>
    <property type="match status" value="1"/>
</dbReference>
<dbReference type="PANTHER" id="PTHR43527:SF2">
    <property type="entry name" value="4-DIPHOSPHOCYTIDYL-2-C-METHYL-D-ERYTHRITOL KINASE, CHLOROPLASTIC"/>
    <property type="match status" value="1"/>
</dbReference>
<dbReference type="Pfam" id="PF08544">
    <property type="entry name" value="GHMP_kinases_C"/>
    <property type="match status" value="1"/>
</dbReference>
<dbReference type="Pfam" id="PF00288">
    <property type="entry name" value="GHMP_kinases_N"/>
    <property type="match status" value="1"/>
</dbReference>
<dbReference type="PIRSF" id="PIRSF010376">
    <property type="entry name" value="IspE"/>
    <property type="match status" value="1"/>
</dbReference>
<dbReference type="PRINTS" id="PR00958">
    <property type="entry name" value="HOMSERKINASE"/>
</dbReference>
<dbReference type="SUPFAM" id="SSF55060">
    <property type="entry name" value="GHMP Kinase, C-terminal domain"/>
    <property type="match status" value="1"/>
</dbReference>
<dbReference type="SUPFAM" id="SSF54211">
    <property type="entry name" value="Ribosomal protein S5 domain 2-like"/>
    <property type="match status" value="1"/>
</dbReference>
<sequence>MVITALARAKINLTLDVLGKRPDGYHEVEMVMQSIELHDRLEFRPCAAGGISLAVEGADLPPGKENLVYRAAELLRAAGGVRAGAEIRLKKAIPVAAGLGGGSADAAAALVALNEMWNTGFSPAGLMELAEQLGSDVPFGLMGGTALARGRGERLERLFPCPPLGLVLVKPPFGVSTAEVYRAFKPGLNPKKADAQAMVRAIKKGDAADIAACLGNALEPVTVKMYPEVAEIKKKLMEAGALGALMAGSGPTVFGLTADLESARQVAARYRRTDEQILVTRTFNPRL</sequence>
<comment type="function">
    <text evidence="1">Catalyzes the phosphorylation of the position 2 hydroxy group of 4-diphosphocytidyl-2C-methyl-D-erythritol.</text>
</comment>
<comment type="catalytic activity">
    <reaction evidence="1">
        <text>4-CDP-2-C-methyl-D-erythritol + ATP = 4-CDP-2-C-methyl-D-erythritol 2-phosphate + ADP + H(+)</text>
        <dbReference type="Rhea" id="RHEA:18437"/>
        <dbReference type="ChEBI" id="CHEBI:15378"/>
        <dbReference type="ChEBI" id="CHEBI:30616"/>
        <dbReference type="ChEBI" id="CHEBI:57823"/>
        <dbReference type="ChEBI" id="CHEBI:57919"/>
        <dbReference type="ChEBI" id="CHEBI:456216"/>
        <dbReference type="EC" id="2.7.1.148"/>
    </reaction>
</comment>
<comment type="pathway">
    <text evidence="1">Isoprenoid biosynthesis; isopentenyl diphosphate biosynthesis via DXP pathway; isopentenyl diphosphate from 1-deoxy-D-xylulose 5-phosphate: step 3/6.</text>
</comment>
<comment type="similarity">
    <text evidence="1">Belongs to the GHMP kinase family. IspE subfamily.</text>
</comment>
<proteinExistence type="inferred from homology"/>